<organism>
    <name type="scientific">Syntrophomonas wolfei subsp. wolfei (strain DSM 2245B / Goettingen)</name>
    <dbReference type="NCBI Taxonomy" id="335541"/>
    <lineage>
        <taxon>Bacteria</taxon>
        <taxon>Bacillati</taxon>
        <taxon>Bacillota</taxon>
        <taxon>Clostridia</taxon>
        <taxon>Eubacteriales</taxon>
        <taxon>Syntrophomonadaceae</taxon>
        <taxon>Syntrophomonas</taxon>
    </lineage>
</organism>
<proteinExistence type="inferred from homology"/>
<sequence length="115" mass="13318">MNRELGLWGEELAAQYLRKKGYKILERNFHTRYGELDLVCEKDDNIVFVEVKTRRSTRFGSPEEAVTPRKIGNLKKAAILYLKSTPRFFPEISFDVVSILVEDGKSKINHIINAF</sequence>
<feature type="chain" id="PRO_0000336277" description="UPF0102 protein Swol_1475">
    <location>
        <begin position="1"/>
        <end position="115"/>
    </location>
</feature>
<protein>
    <recommendedName>
        <fullName evidence="1">UPF0102 protein Swol_1475</fullName>
    </recommendedName>
</protein>
<dbReference type="EMBL" id="CP000448">
    <property type="protein sequence ID" value="ABI68780.1"/>
    <property type="molecule type" value="Genomic_DNA"/>
</dbReference>
<dbReference type="RefSeq" id="WP_011640879.1">
    <property type="nucleotide sequence ID" value="NC_008346.1"/>
</dbReference>
<dbReference type="SMR" id="Q0AWX4"/>
<dbReference type="STRING" id="335541.Swol_1475"/>
<dbReference type="KEGG" id="swo:Swol_1475"/>
<dbReference type="eggNOG" id="COG0792">
    <property type="taxonomic scope" value="Bacteria"/>
</dbReference>
<dbReference type="HOGENOM" id="CLU_115353_3_1_9"/>
<dbReference type="OrthoDB" id="9802516at2"/>
<dbReference type="Proteomes" id="UP000001968">
    <property type="component" value="Chromosome"/>
</dbReference>
<dbReference type="GO" id="GO:0003676">
    <property type="term" value="F:nucleic acid binding"/>
    <property type="evidence" value="ECO:0007669"/>
    <property type="project" value="InterPro"/>
</dbReference>
<dbReference type="CDD" id="cd20736">
    <property type="entry name" value="PoNe_Nuclease"/>
    <property type="match status" value="1"/>
</dbReference>
<dbReference type="Gene3D" id="3.40.1350.10">
    <property type="match status" value="1"/>
</dbReference>
<dbReference type="HAMAP" id="MF_00048">
    <property type="entry name" value="UPF0102"/>
    <property type="match status" value="1"/>
</dbReference>
<dbReference type="InterPro" id="IPR011335">
    <property type="entry name" value="Restrct_endonuc-II-like"/>
</dbReference>
<dbReference type="InterPro" id="IPR011856">
    <property type="entry name" value="tRNA_endonuc-like_dom_sf"/>
</dbReference>
<dbReference type="InterPro" id="IPR003509">
    <property type="entry name" value="UPF0102_YraN-like"/>
</dbReference>
<dbReference type="NCBIfam" id="NF009150">
    <property type="entry name" value="PRK12497.1-3"/>
    <property type="match status" value="1"/>
</dbReference>
<dbReference type="NCBIfam" id="NF009154">
    <property type="entry name" value="PRK12497.3-3"/>
    <property type="match status" value="1"/>
</dbReference>
<dbReference type="NCBIfam" id="TIGR00252">
    <property type="entry name" value="YraN family protein"/>
    <property type="match status" value="1"/>
</dbReference>
<dbReference type="PANTHER" id="PTHR34039">
    <property type="entry name" value="UPF0102 PROTEIN YRAN"/>
    <property type="match status" value="1"/>
</dbReference>
<dbReference type="PANTHER" id="PTHR34039:SF1">
    <property type="entry name" value="UPF0102 PROTEIN YRAN"/>
    <property type="match status" value="1"/>
</dbReference>
<dbReference type="Pfam" id="PF02021">
    <property type="entry name" value="UPF0102"/>
    <property type="match status" value="1"/>
</dbReference>
<dbReference type="SUPFAM" id="SSF52980">
    <property type="entry name" value="Restriction endonuclease-like"/>
    <property type="match status" value="1"/>
</dbReference>
<keyword id="KW-1185">Reference proteome</keyword>
<comment type="similarity">
    <text evidence="1">Belongs to the UPF0102 family.</text>
</comment>
<gene>
    <name type="ordered locus">Swol_1475</name>
</gene>
<accession>Q0AWX4</accession>
<reference key="1">
    <citation type="journal article" date="2010" name="Environ. Microbiol.">
        <title>The genome of Syntrophomonas wolfei: new insights into syntrophic metabolism and biohydrogen production.</title>
        <authorList>
            <person name="Sieber J.R."/>
            <person name="Sims D.R."/>
            <person name="Han C."/>
            <person name="Kim E."/>
            <person name="Lykidis A."/>
            <person name="Lapidus A.L."/>
            <person name="McDonnald E."/>
            <person name="Rohlin L."/>
            <person name="Culley D.E."/>
            <person name="Gunsalus R."/>
            <person name="McInerney M.J."/>
        </authorList>
    </citation>
    <scope>NUCLEOTIDE SEQUENCE [LARGE SCALE GENOMIC DNA]</scope>
    <source>
        <strain>DSM 2245B / Goettingen</strain>
    </source>
</reference>
<evidence type="ECO:0000255" key="1">
    <source>
        <dbReference type="HAMAP-Rule" id="MF_00048"/>
    </source>
</evidence>
<name>Y1475_SYNWW</name>